<reference key="1">
    <citation type="journal article" date="2003" name="Proc. Natl. Acad. Sci. U.S.A.">
        <title>The genome sequence of Blochmannia floridanus: comparative analysis of reduced genomes.</title>
        <authorList>
            <person name="Gil R."/>
            <person name="Silva F.J."/>
            <person name="Zientz E."/>
            <person name="Delmotte F."/>
            <person name="Gonzalez-Candelas F."/>
            <person name="Latorre A."/>
            <person name="Rausell C."/>
            <person name="Kamerbeek J."/>
            <person name="Gadau J."/>
            <person name="Hoelldobler B."/>
            <person name="van Ham R.C.H.J."/>
            <person name="Gross R."/>
            <person name="Moya A."/>
        </authorList>
    </citation>
    <scope>NUCLEOTIDE SEQUENCE [LARGE SCALE GENOMIC DNA]</scope>
</reference>
<sequence>MIFTLKLFKKLFRNRNERILVHMKKIVDMINYMEKDMEKLNDNQLSNKTNEFRMQIKSGINIEELLPQAFAVVRESVKRIFNIRLFDVQMLGGIVLNNRCIAEMRTGEGKTLTATLPAYLNALTGKGVHIVTVNNYLAHRDATYNQPLFEFLGLNVGINLPGQTVCAKKIAYESDITYGTNNEYGFDYLRDNMVFNVKEQVQRELHYALIDEVDSILIDEARTPLIISGPSDDASLSYLKINELVCNIIKRNIDHCKYPEKEEYFTVDEKSRQVVLTEIGLILIEKLLIESGMMGMGESLYSSDNIILLHHVNSALRAHILFACEVDYIVKNGEILIIDEHTGRVMPGRRWSDGLHQAIEAKERVRIQNENQTLASITFQNYFRLYEKLSGMTGTASTESFEFKSIYKLDTVVIPTNQPMIRIDFPDVIYMTEIEKINAIVSDIKDCVNRKQPVLVGTVSIDKSEIISRALKKEGILHKVLNAKIHAAEADIIAQAGYPGAVTIATNMAGRGTDIVLGGNWRSEIAALRNANTHAMLRIKSDWKERHDSVLKSGGLHVIGTERHESRRIDNQLRGRSGRQGDAGSSRFYLSMEDSLIRIFASNKLVDLMKRMGMKSGESIEHPWITKAIAHAQKKVESRNFDIRKQLLEYDDVANDQRRVIYEQRNKLLAMLDVSEVIHNIRYDVVDRILNIYIPLEIIENKKDLIKLEKCLKDDFNLVLSFSEQLDEDTSLYEGKEKIRVCILTEMIKQYKCVKEMVGINVMNAIEKGIILKTFDALWKEHLASMDYLRQGIHLRGYAQKDPKQEYKKESFSMFKKMLDHLQYEIISEISKLQKLNRSN</sequence>
<organism>
    <name type="scientific">Blochmanniella floridana</name>
    <dbReference type="NCBI Taxonomy" id="203907"/>
    <lineage>
        <taxon>Bacteria</taxon>
        <taxon>Pseudomonadati</taxon>
        <taxon>Pseudomonadota</taxon>
        <taxon>Gammaproteobacteria</taxon>
        <taxon>Enterobacterales</taxon>
        <taxon>Enterobacteriaceae</taxon>
        <taxon>ant endosymbionts</taxon>
        <taxon>Candidatus Blochmanniella</taxon>
    </lineage>
</organism>
<evidence type="ECO:0000255" key="1">
    <source>
        <dbReference type="HAMAP-Rule" id="MF_01382"/>
    </source>
</evidence>
<proteinExistence type="inferred from homology"/>
<keyword id="KW-0067">ATP-binding</keyword>
<keyword id="KW-0997">Cell inner membrane</keyword>
<keyword id="KW-1003">Cell membrane</keyword>
<keyword id="KW-0963">Cytoplasm</keyword>
<keyword id="KW-0472">Membrane</keyword>
<keyword id="KW-0547">Nucleotide-binding</keyword>
<keyword id="KW-0653">Protein transport</keyword>
<keyword id="KW-1185">Reference proteome</keyword>
<keyword id="KW-1278">Translocase</keyword>
<keyword id="KW-0811">Translocation</keyword>
<keyword id="KW-0813">Transport</keyword>
<name>SECA_BLOFL</name>
<dbReference type="EC" id="7.4.2.8" evidence="1"/>
<dbReference type="EMBL" id="BX248583">
    <property type="protein sequence ID" value="CAD83669.1"/>
    <property type="molecule type" value="Genomic_DNA"/>
</dbReference>
<dbReference type="SMR" id="Q7VQI2"/>
<dbReference type="STRING" id="203907.Bfl148"/>
<dbReference type="KEGG" id="bfl:Bfl148"/>
<dbReference type="eggNOG" id="COG0653">
    <property type="taxonomic scope" value="Bacteria"/>
</dbReference>
<dbReference type="HOGENOM" id="CLU_005314_3_0_6"/>
<dbReference type="OrthoDB" id="9805579at2"/>
<dbReference type="Proteomes" id="UP000002192">
    <property type="component" value="Chromosome"/>
</dbReference>
<dbReference type="GO" id="GO:0031522">
    <property type="term" value="C:cell envelope Sec protein transport complex"/>
    <property type="evidence" value="ECO:0007669"/>
    <property type="project" value="TreeGrafter"/>
</dbReference>
<dbReference type="GO" id="GO:0005829">
    <property type="term" value="C:cytosol"/>
    <property type="evidence" value="ECO:0007669"/>
    <property type="project" value="TreeGrafter"/>
</dbReference>
<dbReference type="GO" id="GO:0005886">
    <property type="term" value="C:plasma membrane"/>
    <property type="evidence" value="ECO:0007669"/>
    <property type="project" value="UniProtKB-SubCell"/>
</dbReference>
<dbReference type="GO" id="GO:0005524">
    <property type="term" value="F:ATP binding"/>
    <property type="evidence" value="ECO:0007669"/>
    <property type="project" value="UniProtKB-UniRule"/>
</dbReference>
<dbReference type="GO" id="GO:0008564">
    <property type="term" value="F:protein-exporting ATPase activity"/>
    <property type="evidence" value="ECO:0007669"/>
    <property type="project" value="UniProtKB-EC"/>
</dbReference>
<dbReference type="GO" id="GO:0065002">
    <property type="term" value="P:intracellular protein transmembrane transport"/>
    <property type="evidence" value="ECO:0007669"/>
    <property type="project" value="UniProtKB-UniRule"/>
</dbReference>
<dbReference type="GO" id="GO:0017038">
    <property type="term" value="P:protein import"/>
    <property type="evidence" value="ECO:0007669"/>
    <property type="project" value="InterPro"/>
</dbReference>
<dbReference type="GO" id="GO:0006605">
    <property type="term" value="P:protein targeting"/>
    <property type="evidence" value="ECO:0007669"/>
    <property type="project" value="UniProtKB-UniRule"/>
</dbReference>
<dbReference type="GO" id="GO:0043952">
    <property type="term" value="P:protein transport by the Sec complex"/>
    <property type="evidence" value="ECO:0007669"/>
    <property type="project" value="TreeGrafter"/>
</dbReference>
<dbReference type="CDD" id="cd17928">
    <property type="entry name" value="DEXDc_SecA"/>
    <property type="match status" value="1"/>
</dbReference>
<dbReference type="CDD" id="cd18803">
    <property type="entry name" value="SF2_C_secA"/>
    <property type="match status" value="1"/>
</dbReference>
<dbReference type="FunFam" id="3.40.50.300:FF:000113">
    <property type="entry name" value="Preprotein translocase subunit SecA"/>
    <property type="match status" value="1"/>
</dbReference>
<dbReference type="FunFam" id="3.90.1440.10:FF:000001">
    <property type="entry name" value="Preprotein translocase subunit SecA"/>
    <property type="match status" value="1"/>
</dbReference>
<dbReference type="Gene3D" id="1.10.3060.10">
    <property type="entry name" value="Helical scaffold and wing domains of SecA"/>
    <property type="match status" value="1"/>
</dbReference>
<dbReference type="Gene3D" id="3.40.50.300">
    <property type="entry name" value="P-loop containing nucleotide triphosphate hydrolases"/>
    <property type="match status" value="2"/>
</dbReference>
<dbReference type="Gene3D" id="3.90.1440.10">
    <property type="entry name" value="SecA, preprotein cross-linking domain"/>
    <property type="match status" value="1"/>
</dbReference>
<dbReference type="HAMAP" id="MF_01382">
    <property type="entry name" value="SecA"/>
    <property type="match status" value="1"/>
</dbReference>
<dbReference type="InterPro" id="IPR014001">
    <property type="entry name" value="Helicase_ATP-bd"/>
</dbReference>
<dbReference type="InterPro" id="IPR027417">
    <property type="entry name" value="P-loop_NTPase"/>
</dbReference>
<dbReference type="InterPro" id="IPR000185">
    <property type="entry name" value="SecA"/>
</dbReference>
<dbReference type="InterPro" id="IPR020937">
    <property type="entry name" value="SecA_CS"/>
</dbReference>
<dbReference type="InterPro" id="IPR011115">
    <property type="entry name" value="SecA_DEAD"/>
</dbReference>
<dbReference type="InterPro" id="IPR014018">
    <property type="entry name" value="SecA_motor_DEAD"/>
</dbReference>
<dbReference type="InterPro" id="IPR011130">
    <property type="entry name" value="SecA_preprotein_X-link_dom"/>
</dbReference>
<dbReference type="InterPro" id="IPR044722">
    <property type="entry name" value="SecA_SF2_C"/>
</dbReference>
<dbReference type="InterPro" id="IPR011116">
    <property type="entry name" value="SecA_Wing/Scaffold"/>
</dbReference>
<dbReference type="InterPro" id="IPR036266">
    <property type="entry name" value="SecA_Wing/Scaffold_sf"/>
</dbReference>
<dbReference type="InterPro" id="IPR036670">
    <property type="entry name" value="SecA_X-link_sf"/>
</dbReference>
<dbReference type="NCBIfam" id="NF009538">
    <property type="entry name" value="PRK12904.1"/>
    <property type="match status" value="1"/>
</dbReference>
<dbReference type="NCBIfam" id="TIGR00963">
    <property type="entry name" value="secA"/>
    <property type="match status" value="1"/>
</dbReference>
<dbReference type="PANTHER" id="PTHR30612:SF0">
    <property type="entry name" value="CHLOROPLAST PROTEIN-TRANSPORTING ATPASE"/>
    <property type="match status" value="1"/>
</dbReference>
<dbReference type="PANTHER" id="PTHR30612">
    <property type="entry name" value="SECA INNER MEMBRANE COMPONENT OF SEC PROTEIN SECRETION SYSTEM"/>
    <property type="match status" value="1"/>
</dbReference>
<dbReference type="Pfam" id="PF21090">
    <property type="entry name" value="P-loop_SecA"/>
    <property type="match status" value="1"/>
</dbReference>
<dbReference type="Pfam" id="PF07517">
    <property type="entry name" value="SecA_DEAD"/>
    <property type="match status" value="1"/>
</dbReference>
<dbReference type="Pfam" id="PF01043">
    <property type="entry name" value="SecA_PP_bind"/>
    <property type="match status" value="1"/>
</dbReference>
<dbReference type="Pfam" id="PF07516">
    <property type="entry name" value="SecA_SW"/>
    <property type="match status" value="1"/>
</dbReference>
<dbReference type="PRINTS" id="PR00906">
    <property type="entry name" value="SECA"/>
</dbReference>
<dbReference type="SMART" id="SM00957">
    <property type="entry name" value="SecA_DEAD"/>
    <property type="match status" value="1"/>
</dbReference>
<dbReference type="SMART" id="SM00958">
    <property type="entry name" value="SecA_PP_bind"/>
    <property type="match status" value="1"/>
</dbReference>
<dbReference type="SUPFAM" id="SSF81886">
    <property type="entry name" value="Helical scaffold and wing domains of SecA"/>
    <property type="match status" value="1"/>
</dbReference>
<dbReference type="SUPFAM" id="SSF52540">
    <property type="entry name" value="P-loop containing nucleoside triphosphate hydrolases"/>
    <property type="match status" value="2"/>
</dbReference>
<dbReference type="SUPFAM" id="SSF81767">
    <property type="entry name" value="Pre-protein crosslinking domain of SecA"/>
    <property type="match status" value="1"/>
</dbReference>
<dbReference type="PROSITE" id="PS01312">
    <property type="entry name" value="SECA"/>
    <property type="match status" value="1"/>
</dbReference>
<dbReference type="PROSITE" id="PS51196">
    <property type="entry name" value="SECA_MOTOR_DEAD"/>
    <property type="match status" value="1"/>
</dbReference>
<protein>
    <recommendedName>
        <fullName evidence="1">Protein translocase subunit SecA</fullName>
        <ecNumber evidence="1">7.4.2.8</ecNumber>
    </recommendedName>
</protein>
<gene>
    <name evidence="1" type="primary">secA</name>
    <name type="ordered locus">Bfl148</name>
</gene>
<accession>Q7VQI2</accession>
<comment type="function">
    <text evidence="1">Part of the Sec protein translocase complex. Interacts with the SecYEG preprotein conducting channel. Has a central role in coupling the hydrolysis of ATP to the transfer of proteins into and across the cell membrane, serving as an ATP-driven molecular motor driving the stepwise translocation of polypeptide chains across the membrane.</text>
</comment>
<comment type="catalytic activity">
    <reaction evidence="1">
        <text>ATP + H2O + cellular proteinSide 1 = ADP + phosphate + cellular proteinSide 2.</text>
        <dbReference type="EC" id="7.4.2.8"/>
    </reaction>
</comment>
<comment type="subunit">
    <text evidence="1">Monomer and homodimer. Part of the essential Sec protein translocation apparatus which comprises SecA, SecYEG and auxiliary proteins SecDF-YajC and YidC.</text>
</comment>
<comment type="subcellular location">
    <subcellularLocation>
        <location evidence="1">Cell inner membrane</location>
        <topology evidence="1">Peripheral membrane protein</topology>
        <orientation evidence="1">Cytoplasmic side</orientation>
    </subcellularLocation>
    <subcellularLocation>
        <location evidence="1">Cytoplasm</location>
    </subcellularLocation>
    <text evidence="1">Distribution is 50-50.</text>
</comment>
<comment type="similarity">
    <text evidence="1">Belongs to the SecA family.</text>
</comment>
<feature type="chain" id="PRO_1000073462" description="Protein translocase subunit SecA">
    <location>
        <begin position="1"/>
        <end position="840"/>
    </location>
</feature>
<feature type="binding site" evidence="1">
    <location>
        <position position="89"/>
    </location>
    <ligand>
        <name>ATP</name>
        <dbReference type="ChEBI" id="CHEBI:30616"/>
    </ligand>
</feature>
<feature type="binding site" evidence="1">
    <location>
        <begin position="107"/>
        <end position="111"/>
    </location>
    <ligand>
        <name>ATP</name>
        <dbReference type="ChEBI" id="CHEBI:30616"/>
    </ligand>
</feature>
<feature type="binding site" evidence="1">
    <location>
        <position position="514"/>
    </location>
    <ligand>
        <name>ATP</name>
        <dbReference type="ChEBI" id="CHEBI:30616"/>
    </ligand>
</feature>